<proteinExistence type="inferred from homology"/>
<sequence>MRTQRLKKLALVCALGFACITTAQAAERIAFIPKLVGVGFFTSGGKGAVDAGKALGVDVTYDGPTEPSVSGQVQLINNFVNQGYNAIVVSAVSPDGLCPALKRAMQRGVKILTWDSDTKPECRSVYINQGTPNQLGSMLVDMAANQVKKEQAKVAFFYSSPTVTDQNQWVNEAKKKIQQEHPGWEIVTTQFGYNDATKSLQTAEGILKAYADLDAIIAPDANALPAAAQAAENLKRANVAIVGFSTPNVMRPYVERGTVKEFGLWDVVNQGKISVYVANEMLKKGDLNVGDKIDIPNIGVVEVSPNRVQGYDYEAKGNGIVLLPQRVIFTKENISKYDF</sequence>
<evidence type="ECO:0000250" key="1"/>
<evidence type="ECO:0000255" key="2"/>
<evidence type="ECO:0000305" key="3"/>
<feature type="signal peptide" evidence="2">
    <location>
        <begin position="1"/>
        <end position="25"/>
    </location>
</feature>
<feature type="chain" id="PRO_5000115071" description="Autoinducer 2-binding protein LsrB">
    <location>
        <begin position="26"/>
        <end position="339"/>
    </location>
</feature>
<protein>
    <recommendedName>
        <fullName>Autoinducer 2-binding protein LsrB</fullName>
        <shortName>AI-2-binding protein LsrB</shortName>
    </recommendedName>
</protein>
<name>LSRB_YERPN</name>
<organism>
    <name type="scientific">Yersinia pestis bv. Antiqua (strain Nepal516)</name>
    <dbReference type="NCBI Taxonomy" id="377628"/>
    <lineage>
        <taxon>Bacteria</taxon>
        <taxon>Pseudomonadati</taxon>
        <taxon>Pseudomonadota</taxon>
        <taxon>Gammaproteobacteria</taxon>
        <taxon>Enterobacterales</taxon>
        <taxon>Yersiniaceae</taxon>
        <taxon>Yersinia</taxon>
    </lineage>
</organism>
<accession>Q1CN18</accession>
<accession>C4GNH9</accession>
<gene>
    <name type="primary">lsrB</name>
    <name type="ordered locus">YPN_0279</name>
    <name type="ORF">YP516_0276</name>
</gene>
<keyword id="KW-0574">Periplasm</keyword>
<keyword id="KW-0732">Signal</keyword>
<reference key="1">
    <citation type="journal article" date="2006" name="J. Bacteriol.">
        <title>Complete genome sequence of Yersinia pestis strains Antiqua and Nepal516: evidence of gene reduction in an emerging pathogen.</title>
        <authorList>
            <person name="Chain P.S.G."/>
            <person name="Hu P."/>
            <person name="Malfatti S.A."/>
            <person name="Radnedge L."/>
            <person name="Larimer F."/>
            <person name="Vergez L.M."/>
            <person name="Worsham P."/>
            <person name="Chu M.C."/>
            <person name="Andersen G.L."/>
        </authorList>
    </citation>
    <scope>NUCLEOTIDE SEQUENCE [LARGE SCALE GENOMIC DNA]</scope>
    <source>
        <strain>Nepal516</strain>
    </source>
</reference>
<reference key="2">
    <citation type="submission" date="2009-04" db="EMBL/GenBank/DDBJ databases">
        <title>Yersinia pestis Nepal516A whole genome shotgun sequencing project.</title>
        <authorList>
            <person name="Plunkett G. III"/>
            <person name="Anderson B.D."/>
            <person name="Baumler D.J."/>
            <person name="Burland V."/>
            <person name="Cabot E.L."/>
            <person name="Glasner J.D."/>
            <person name="Mau B."/>
            <person name="Neeno-Eckwall E."/>
            <person name="Perna N.T."/>
            <person name="Munk A.C."/>
            <person name="Tapia R."/>
            <person name="Green L.D."/>
            <person name="Rogers Y.C."/>
            <person name="Detter J.C."/>
            <person name="Bruce D.C."/>
            <person name="Brettin T.S."/>
        </authorList>
    </citation>
    <scope>NUCLEOTIDE SEQUENCE [LARGE SCALE GENOMIC DNA]</scope>
    <source>
        <strain>Nepal516</strain>
    </source>
</reference>
<comment type="function">
    <text evidence="1">Part of the ABC transporter complex LsrABCD involved in autoinducer 2 (AI-2) import. Binds AI-2 and delivers it to the LsrC and LsrD permeases (By similarity).</text>
</comment>
<comment type="subunit">
    <text evidence="1">The complex is composed of two ATP-binding proteins (LsrA), two transmembrane proteins (LsrC and LsrD) and a solute-binding protein (LsrB).</text>
</comment>
<comment type="subcellular location">
    <subcellularLocation>
        <location evidence="3">Periplasm</location>
    </subcellularLocation>
</comment>
<comment type="similarity">
    <text evidence="3">Belongs to the bacterial solute-binding protein 2 family.</text>
</comment>
<dbReference type="EMBL" id="CP000305">
    <property type="protein sequence ID" value="ABG16612.1"/>
    <property type="molecule type" value="Genomic_DNA"/>
</dbReference>
<dbReference type="EMBL" id="ACNQ01000006">
    <property type="protein sequence ID" value="EEO78061.1"/>
    <property type="molecule type" value="Genomic_DNA"/>
</dbReference>
<dbReference type="RefSeq" id="WP_002209189.1">
    <property type="nucleotide sequence ID" value="NZ_ACNQ01000006.1"/>
</dbReference>
<dbReference type="SMR" id="Q1CN18"/>
<dbReference type="GeneID" id="57974201"/>
<dbReference type="KEGG" id="ypn:YPN_0279"/>
<dbReference type="HOGENOM" id="CLU_037628_3_0_6"/>
<dbReference type="Proteomes" id="UP000008936">
    <property type="component" value="Chromosome"/>
</dbReference>
<dbReference type="GO" id="GO:0043190">
    <property type="term" value="C:ATP-binding cassette (ABC) transporter complex"/>
    <property type="evidence" value="ECO:0007669"/>
    <property type="project" value="InterPro"/>
</dbReference>
<dbReference type="GO" id="GO:0030288">
    <property type="term" value="C:outer membrane-bounded periplasmic space"/>
    <property type="evidence" value="ECO:0007669"/>
    <property type="project" value="TreeGrafter"/>
</dbReference>
<dbReference type="GO" id="GO:0030246">
    <property type="term" value="F:carbohydrate binding"/>
    <property type="evidence" value="ECO:0007669"/>
    <property type="project" value="TreeGrafter"/>
</dbReference>
<dbReference type="CDD" id="cd20003">
    <property type="entry name" value="PBP1_LsrB_Quorum_Sensing"/>
    <property type="match status" value="1"/>
</dbReference>
<dbReference type="Gene3D" id="3.40.50.2300">
    <property type="match status" value="2"/>
</dbReference>
<dbReference type="InterPro" id="IPR050555">
    <property type="entry name" value="Bact_Solute-Bind_Prot2"/>
</dbReference>
<dbReference type="InterPro" id="IPR030159">
    <property type="entry name" value="LsrB"/>
</dbReference>
<dbReference type="InterPro" id="IPR028082">
    <property type="entry name" value="Peripla_BP_I"/>
</dbReference>
<dbReference type="InterPro" id="IPR025997">
    <property type="entry name" value="SBP_2_dom"/>
</dbReference>
<dbReference type="NCBIfam" id="NF011937">
    <property type="entry name" value="PRK15408.1"/>
    <property type="match status" value="1"/>
</dbReference>
<dbReference type="PANTHER" id="PTHR30036:SF7">
    <property type="entry name" value="ABC TRANSPORTER PERIPLASMIC-BINDING PROTEIN YPHF"/>
    <property type="match status" value="1"/>
</dbReference>
<dbReference type="PANTHER" id="PTHR30036">
    <property type="entry name" value="D-XYLOSE-BINDING PERIPLASMIC PROTEIN"/>
    <property type="match status" value="1"/>
</dbReference>
<dbReference type="Pfam" id="PF13407">
    <property type="entry name" value="Peripla_BP_4"/>
    <property type="match status" value="1"/>
</dbReference>
<dbReference type="SUPFAM" id="SSF53822">
    <property type="entry name" value="Periplasmic binding protein-like I"/>
    <property type="match status" value="1"/>
</dbReference>